<accession>B7K7J4</accession>
<name>QUEC_GLOC7</name>
<sequence length="230" mass="24831">MNQPKAVILLSGGLDSATTAAIALASGYEAIALSLFYGQRHHKEIEAAQKIVQVLGIKEHYSLEVNLSQWGGSALTDQSIEVPKAGLNPHLIPITYVPGRNTVFIAIALSLAEAKGAQAIYLGINAIDYSGYPDCRPEYLEAFQKLANLSSKIGVEGKTIQLIAPLVKDSKVDIVRRAVRLGVPIADTWSCYQGEDEPCGLCDSCRIRDRALIEAGYPELATEIGRKLSH</sequence>
<proteinExistence type="inferred from homology"/>
<comment type="function">
    <text evidence="1">Catalyzes the ATP-dependent conversion of 7-carboxy-7-deazaguanine (CDG) to 7-cyano-7-deazaguanine (preQ(0)).</text>
</comment>
<comment type="catalytic activity">
    <reaction evidence="1">
        <text>7-carboxy-7-deazaguanine + NH4(+) + ATP = 7-cyano-7-deazaguanine + ADP + phosphate + H2O + H(+)</text>
        <dbReference type="Rhea" id="RHEA:27982"/>
        <dbReference type="ChEBI" id="CHEBI:15377"/>
        <dbReference type="ChEBI" id="CHEBI:15378"/>
        <dbReference type="ChEBI" id="CHEBI:28938"/>
        <dbReference type="ChEBI" id="CHEBI:30616"/>
        <dbReference type="ChEBI" id="CHEBI:43474"/>
        <dbReference type="ChEBI" id="CHEBI:45075"/>
        <dbReference type="ChEBI" id="CHEBI:61036"/>
        <dbReference type="ChEBI" id="CHEBI:456216"/>
        <dbReference type="EC" id="6.3.4.20"/>
    </reaction>
</comment>
<comment type="cofactor">
    <cofactor evidence="1">
        <name>Zn(2+)</name>
        <dbReference type="ChEBI" id="CHEBI:29105"/>
    </cofactor>
    <text evidence="1">Binds 1 zinc ion per subunit.</text>
</comment>
<comment type="pathway">
    <text evidence="1">Purine metabolism; 7-cyano-7-deazaguanine biosynthesis.</text>
</comment>
<comment type="similarity">
    <text evidence="1">Belongs to the QueC family.</text>
</comment>
<dbReference type="EC" id="6.3.4.20" evidence="1"/>
<dbReference type="EMBL" id="CP001291">
    <property type="protein sequence ID" value="ACK69762.1"/>
    <property type="molecule type" value="Genomic_DNA"/>
</dbReference>
<dbReference type="RefSeq" id="WP_012598708.1">
    <property type="nucleotide sequence ID" value="NC_011729.1"/>
</dbReference>
<dbReference type="SMR" id="B7K7J4"/>
<dbReference type="STRING" id="65393.PCC7424_1317"/>
<dbReference type="KEGG" id="cyc:PCC7424_1317"/>
<dbReference type="eggNOG" id="COG0603">
    <property type="taxonomic scope" value="Bacteria"/>
</dbReference>
<dbReference type="HOGENOM" id="CLU_081854_1_0_3"/>
<dbReference type="OrthoDB" id="9789567at2"/>
<dbReference type="UniPathway" id="UPA00391"/>
<dbReference type="Proteomes" id="UP000002384">
    <property type="component" value="Chromosome"/>
</dbReference>
<dbReference type="GO" id="GO:0005524">
    <property type="term" value="F:ATP binding"/>
    <property type="evidence" value="ECO:0007669"/>
    <property type="project" value="UniProtKB-UniRule"/>
</dbReference>
<dbReference type="GO" id="GO:0016879">
    <property type="term" value="F:ligase activity, forming carbon-nitrogen bonds"/>
    <property type="evidence" value="ECO:0007669"/>
    <property type="project" value="UniProtKB-UniRule"/>
</dbReference>
<dbReference type="GO" id="GO:0008270">
    <property type="term" value="F:zinc ion binding"/>
    <property type="evidence" value="ECO:0007669"/>
    <property type="project" value="UniProtKB-UniRule"/>
</dbReference>
<dbReference type="GO" id="GO:0008616">
    <property type="term" value="P:queuosine biosynthetic process"/>
    <property type="evidence" value="ECO:0007669"/>
    <property type="project" value="UniProtKB-UniRule"/>
</dbReference>
<dbReference type="CDD" id="cd01995">
    <property type="entry name" value="QueC-like"/>
    <property type="match status" value="1"/>
</dbReference>
<dbReference type="Gene3D" id="3.40.50.620">
    <property type="entry name" value="HUPs"/>
    <property type="match status" value="1"/>
</dbReference>
<dbReference type="HAMAP" id="MF_01633">
    <property type="entry name" value="QueC"/>
    <property type="match status" value="1"/>
</dbReference>
<dbReference type="InterPro" id="IPR018317">
    <property type="entry name" value="QueC"/>
</dbReference>
<dbReference type="InterPro" id="IPR014729">
    <property type="entry name" value="Rossmann-like_a/b/a_fold"/>
</dbReference>
<dbReference type="NCBIfam" id="TIGR00364">
    <property type="entry name" value="7-cyano-7-deazaguanine synthase QueC"/>
    <property type="match status" value="1"/>
</dbReference>
<dbReference type="PANTHER" id="PTHR42914">
    <property type="entry name" value="7-CYANO-7-DEAZAGUANINE SYNTHASE"/>
    <property type="match status" value="1"/>
</dbReference>
<dbReference type="PANTHER" id="PTHR42914:SF1">
    <property type="entry name" value="7-CYANO-7-DEAZAGUANINE SYNTHASE"/>
    <property type="match status" value="1"/>
</dbReference>
<dbReference type="Pfam" id="PF06508">
    <property type="entry name" value="QueC"/>
    <property type="match status" value="1"/>
</dbReference>
<dbReference type="PIRSF" id="PIRSF006293">
    <property type="entry name" value="ExsB"/>
    <property type="match status" value="1"/>
</dbReference>
<dbReference type="SUPFAM" id="SSF52402">
    <property type="entry name" value="Adenine nucleotide alpha hydrolases-like"/>
    <property type="match status" value="1"/>
</dbReference>
<evidence type="ECO:0000255" key="1">
    <source>
        <dbReference type="HAMAP-Rule" id="MF_01633"/>
    </source>
</evidence>
<gene>
    <name evidence="1" type="primary">queC</name>
    <name type="ordered locus">PCC7424_1317</name>
</gene>
<reference key="1">
    <citation type="journal article" date="2011" name="MBio">
        <title>Novel metabolic attributes of the genus Cyanothece, comprising a group of unicellular nitrogen-fixing Cyanobacteria.</title>
        <authorList>
            <person name="Bandyopadhyay A."/>
            <person name="Elvitigala T."/>
            <person name="Welsh E."/>
            <person name="Stockel J."/>
            <person name="Liberton M."/>
            <person name="Min H."/>
            <person name="Sherman L.A."/>
            <person name="Pakrasi H.B."/>
        </authorList>
    </citation>
    <scope>NUCLEOTIDE SEQUENCE [LARGE SCALE GENOMIC DNA]</scope>
    <source>
        <strain>PCC 7424</strain>
    </source>
</reference>
<feature type="chain" id="PRO_1000186582" description="7-cyano-7-deazaguanine synthase">
    <location>
        <begin position="1"/>
        <end position="230"/>
    </location>
</feature>
<feature type="binding site" evidence="1">
    <location>
        <begin position="10"/>
        <end position="20"/>
    </location>
    <ligand>
        <name>ATP</name>
        <dbReference type="ChEBI" id="CHEBI:30616"/>
    </ligand>
</feature>
<feature type="binding site" evidence="1">
    <location>
        <position position="191"/>
    </location>
    <ligand>
        <name>Zn(2+)</name>
        <dbReference type="ChEBI" id="CHEBI:29105"/>
    </ligand>
</feature>
<feature type="binding site" evidence="1">
    <location>
        <position position="199"/>
    </location>
    <ligand>
        <name>Zn(2+)</name>
        <dbReference type="ChEBI" id="CHEBI:29105"/>
    </ligand>
</feature>
<feature type="binding site" evidence="1">
    <location>
        <position position="202"/>
    </location>
    <ligand>
        <name>Zn(2+)</name>
        <dbReference type="ChEBI" id="CHEBI:29105"/>
    </ligand>
</feature>
<feature type="binding site" evidence="1">
    <location>
        <position position="205"/>
    </location>
    <ligand>
        <name>Zn(2+)</name>
        <dbReference type="ChEBI" id="CHEBI:29105"/>
    </ligand>
</feature>
<keyword id="KW-0067">ATP-binding</keyword>
<keyword id="KW-0436">Ligase</keyword>
<keyword id="KW-0479">Metal-binding</keyword>
<keyword id="KW-0547">Nucleotide-binding</keyword>
<keyword id="KW-0671">Queuosine biosynthesis</keyword>
<keyword id="KW-1185">Reference proteome</keyword>
<keyword id="KW-0862">Zinc</keyword>
<organism>
    <name type="scientific">Gloeothece citriformis (strain PCC 7424)</name>
    <name type="common">Cyanothece sp. (strain PCC 7424)</name>
    <dbReference type="NCBI Taxonomy" id="65393"/>
    <lineage>
        <taxon>Bacteria</taxon>
        <taxon>Bacillati</taxon>
        <taxon>Cyanobacteriota</taxon>
        <taxon>Cyanophyceae</taxon>
        <taxon>Oscillatoriophycideae</taxon>
        <taxon>Chroococcales</taxon>
        <taxon>Aphanothecaceae</taxon>
        <taxon>Gloeothece</taxon>
        <taxon>Gloeothece citriformis</taxon>
    </lineage>
</organism>
<protein>
    <recommendedName>
        <fullName evidence="1">7-cyano-7-deazaguanine synthase</fullName>
        <ecNumber evidence="1">6.3.4.20</ecNumber>
    </recommendedName>
    <alternativeName>
        <fullName evidence="1">7-cyano-7-carbaguanine synthase</fullName>
    </alternativeName>
    <alternativeName>
        <fullName evidence="1">PreQ(0) synthase</fullName>
    </alternativeName>
    <alternativeName>
        <fullName evidence="1">Queuosine biosynthesis protein QueC</fullName>
    </alternativeName>
</protein>